<dbReference type="EC" id="3.11.1.1" evidence="1"/>
<dbReference type="EMBL" id="BX640442">
    <property type="protein sequence ID" value="CAE32398.1"/>
    <property type="molecule type" value="Genomic_DNA"/>
</dbReference>
<dbReference type="RefSeq" id="WP_003820286.1">
    <property type="nucleotide sequence ID" value="NC_002927.3"/>
</dbReference>
<dbReference type="SMR" id="Q7WL48"/>
<dbReference type="GeneID" id="93204237"/>
<dbReference type="KEGG" id="bbr:BB1901"/>
<dbReference type="eggNOG" id="COG0637">
    <property type="taxonomic scope" value="Bacteria"/>
</dbReference>
<dbReference type="HOGENOM" id="CLU_045011_12_0_4"/>
<dbReference type="Proteomes" id="UP000001027">
    <property type="component" value="Chromosome"/>
</dbReference>
<dbReference type="GO" id="GO:0005829">
    <property type="term" value="C:cytosol"/>
    <property type="evidence" value="ECO:0007669"/>
    <property type="project" value="TreeGrafter"/>
</dbReference>
<dbReference type="GO" id="GO:0000287">
    <property type="term" value="F:magnesium ion binding"/>
    <property type="evidence" value="ECO:0007669"/>
    <property type="project" value="UniProtKB-UniRule"/>
</dbReference>
<dbReference type="GO" id="GO:0008967">
    <property type="term" value="F:phosphoglycolate phosphatase activity"/>
    <property type="evidence" value="ECO:0007669"/>
    <property type="project" value="TreeGrafter"/>
</dbReference>
<dbReference type="GO" id="GO:0050194">
    <property type="term" value="F:phosphonoacetaldehyde hydrolase activity"/>
    <property type="evidence" value="ECO:0007669"/>
    <property type="project" value="UniProtKB-UniRule"/>
</dbReference>
<dbReference type="GO" id="GO:0006281">
    <property type="term" value="P:DNA repair"/>
    <property type="evidence" value="ECO:0007669"/>
    <property type="project" value="TreeGrafter"/>
</dbReference>
<dbReference type="GO" id="GO:0019700">
    <property type="term" value="P:organic phosphonate catabolic process"/>
    <property type="evidence" value="ECO:0007669"/>
    <property type="project" value="InterPro"/>
</dbReference>
<dbReference type="CDD" id="cd02586">
    <property type="entry name" value="HAD_PHN"/>
    <property type="match status" value="1"/>
</dbReference>
<dbReference type="FunFam" id="1.10.150.240:FF:000006">
    <property type="entry name" value="Phosphonoacetaldehyde hydrolase"/>
    <property type="match status" value="1"/>
</dbReference>
<dbReference type="Gene3D" id="3.40.50.1000">
    <property type="entry name" value="HAD superfamily/HAD-like"/>
    <property type="match status" value="1"/>
</dbReference>
<dbReference type="Gene3D" id="1.10.150.240">
    <property type="entry name" value="Putative phosphatase, domain 2"/>
    <property type="match status" value="1"/>
</dbReference>
<dbReference type="HAMAP" id="MF_01375">
    <property type="entry name" value="PhnX"/>
    <property type="match status" value="1"/>
</dbReference>
<dbReference type="InterPro" id="IPR050155">
    <property type="entry name" value="HAD-like_hydrolase_sf"/>
</dbReference>
<dbReference type="InterPro" id="IPR036412">
    <property type="entry name" value="HAD-like_sf"/>
</dbReference>
<dbReference type="InterPro" id="IPR006439">
    <property type="entry name" value="HAD-SF_hydro_IA"/>
</dbReference>
<dbReference type="InterPro" id="IPR023214">
    <property type="entry name" value="HAD_sf"/>
</dbReference>
<dbReference type="InterPro" id="IPR023198">
    <property type="entry name" value="PGP-like_dom2"/>
</dbReference>
<dbReference type="InterPro" id="IPR006323">
    <property type="entry name" value="Phosphonoacetald_hydro"/>
</dbReference>
<dbReference type="NCBIfam" id="TIGR01509">
    <property type="entry name" value="HAD-SF-IA-v3"/>
    <property type="match status" value="1"/>
</dbReference>
<dbReference type="NCBIfam" id="TIGR01422">
    <property type="entry name" value="phosphonatase"/>
    <property type="match status" value="1"/>
</dbReference>
<dbReference type="PANTHER" id="PTHR43434">
    <property type="entry name" value="PHOSPHOGLYCOLATE PHOSPHATASE"/>
    <property type="match status" value="1"/>
</dbReference>
<dbReference type="PANTHER" id="PTHR43434:SF19">
    <property type="entry name" value="PHOSPHONOACETALDEHYDE HYDROLASE"/>
    <property type="match status" value="1"/>
</dbReference>
<dbReference type="Pfam" id="PF00702">
    <property type="entry name" value="Hydrolase"/>
    <property type="match status" value="1"/>
</dbReference>
<dbReference type="SFLD" id="SFLDG01129">
    <property type="entry name" value="C1.5:_HAD__Beta-PGM__Phosphata"/>
    <property type="match status" value="1"/>
</dbReference>
<dbReference type="SFLD" id="SFLDF00038">
    <property type="entry name" value="phosphonoacetaldehyde_hydrolas"/>
    <property type="match status" value="1"/>
</dbReference>
<dbReference type="SUPFAM" id="SSF56784">
    <property type="entry name" value="HAD-like"/>
    <property type="match status" value="1"/>
</dbReference>
<name>PHNX_BORBR</name>
<keyword id="KW-0378">Hydrolase</keyword>
<keyword id="KW-0460">Magnesium</keyword>
<keyword id="KW-0479">Metal-binding</keyword>
<keyword id="KW-0704">Schiff base</keyword>
<comment type="function">
    <text evidence="1">Involved in phosphonate degradation.</text>
</comment>
<comment type="catalytic activity">
    <reaction evidence="1">
        <text>phosphonoacetaldehyde + H2O = acetaldehyde + phosphate + H(+)</text>
        <dbReference type="Rhea" id="RHEA:18905"/>
        <dbReference type="ChEBI" id="CHEBI:15343"/>
        <dbReference type="ChEBI" id="CHEBI:15377"/>
        <dbReference type="ChEBI" id="CHEBI:15378"/>
        <dbReference type="ChEBI" id="CHEBI:43474"/>
        <dbReference type="ChEBI" id="CHEBI:58383"/>
        <dbReference type="EC" id="3.11.1.1"/>
    </reaction>
</comment>
<comment type="cofactor">
    <cofactor evidence="1">
        <name>Mg(2+)</name>
        <dbReference type="ChEBI" id="CHEBI:18420"/>
    </cofactor>
    <text evidence="1">Binds 1 Mg(2+) ion per subunit.</text>
</comment>
<comment type="subunit">
    <text evidence="1">Homodimer.</text>
</comment>
<comment type="similarity">
    <text evidence="1">Belongs to the HAD-like hydrolase superfamily. PhnX family.</text>
</comment>
<comment type="caution">
    <text evidence="2">The first enzyme involved in phosphonate degradation (PhnW, EC 2.6.1.37) is not found in this organism. The function of this enzyme is therefore uncertain.</text>
</comment>
<evidence type="ECO:0000255" key="1">
    <source>
        <dbReference type="HAMAP-Rule" id="MF_01375"/>
    </source>
</evidence>
<evidence type="ECO:0000305" key="2"/>
<feature type="chain" id="PRO_0000284584" description="Phosphonoacetaldehyde hydrolase">
    <location>
        <begin position="1"/>
        <end position="276"/>
    </location>
</feature>
<feature type="active site" description="Nucleophile" evidence="1">
    <location>
        <position position="19"/>
    </location>
</feature>
<feature type="active site" description="Schiff-base intermediate with substrate" evidence="1">
    <location>
        <position position="60"/>
    </location>
</feature>
<feature type="binding site" evidence="1">
    <location>
        <position position="19"/>
    </location>
    <ligand>
        <name>Mg(2+)</name>
        <dbReference type="ChEBI" id="CHEBI:18420"/>
    </ligand>
</feature>
<feature type="binding site" evidence="1">
    <location>
        <position position="21"/>
    </location>
    <ligand>
        <name>Mg(2+)</name>
        <dbReference type="ChEBI" id="CHEBI:18420"/>
    </ligand>
</feature>
<feature type="binding site" evidence="1">
    <location>
        <position position="193"/>
    </location>
    <ligand>
        <name>Mg(2+)</name>
        <dbReference type="ChEBI" id="CHEBI:18420"/>
    </ligand>
</feature>
<protein>
    <recommendedName>
        <fullName evidence="1">Phosphonoacetaldehyde hydrolase</fullName>
        <shortName evidence="1">Phosphonatase</shortName>
        <ecNumber evidence="1">3.11.1.1</ecNumber>
    </recommendedName>
    <alternativeName>
        <fullName evidence="1">Phosphonoacetaldehyde phosphonohydrolase</fullName>
    </alternativeName>
</protein>
<proteinExistence type="inferred from homology"/>
<reference key="1">
    <citation type="journal article" date="2003" name="Nat. Genet.">
        <title>Comparative analysis of the genome sequences of Bordetella pertussis, Bordetella parapertussis and Bordetella bronchiseptica.</title>
        <authorList>
            <person name="Parkhill J."/>
            <person name="Sebaihia M."/>
            <person name="Preston A."/>
            <person name="Murphy L.D."/>
            <person name="Thomson N.R."/>
            <person name="Harris D.E."/>
            <person name="Holden M.T.G."/>
            <person name="Churcher C.M."/>
            <person name="Bentley S.D."/>
            <person name="Mungall K.L."/>
            <person name="Cerdeno-Tarraga A.-M."/>
            <person name="Temple L."/>
            <person name="James K.D."/>
            <person name="Harris B."/>
            <person name="Quail M.A."/>
            <person name="Achtman M."/>
            <person name="Atkin R."/>
            <person name="Baker S."/>
            <person name="Basham D."/>
            <person name="Bason N."/>
            <person name="Cherevach I."/>
            <person name="Chillingworth T."/>
            <person name="Collins M."/>
            <person name="Cronin A."/>
            <person name="Davis P."/>
            <person name="Doggett J."/>
            <person name="Feltwell T."/>
            <person name="Goble A."/>
            <person name="Hamlin N."/>
            <person name="Hauser H."/>
            <person name="Holroyd S."/>
            <person name="Jagels K."/>
            <person name="Leather S."/>
            <person name="Moule S."/>
            <person name="Norberczak H."/>
            <person name="O'Neil S."/>
            <person name="Ormond D."/>
            <person name="Price C."/>
            <person name="Rabbinowitsch E."/>
            <person name="Rutter S."/>
            <person name="Sanders M."/>
            <person name="Saunders D."/>
            <person name="Seeger K."/>
            <person name="Sharp S."/>
            <person name="Simmonds M."/>
            <person name="Skelton J."/>
            <person name="Squares R."/>
            <person name="Squares S."/>
            <person name="Stevens K."/>
            <person name="Unwin L."/>
            <person name="Whitehead S."/>
            <person name="Barrell B.G."/>
            <person name="Maskell D.J."/>
        </authorList>
    </citation>
    <scope>NUCLEOTIDE SEQUENCE [LARGE SCALE GENOMIC DNA]</scope>
    <source>
        <strain>ATCC BAA-588 / NCTC 13252 / RB50</strain>
    </source>
</reference>
<accession>Q7WL48</accession>
<sequence length="276" mass="29871">MNAMTLATLPVRLEALVFDWAGTLVDFGSFAPTKVFVDAFARFGVQISLEQARGPMGMGKWDHIRALCNDAAIARQYQEQFGRLPTDEDVTAIYERFLPMQLEKVAEYSQPIPGAIELLHGLRQRGLKLGSCSGYPAAVMQRVLERAEREGLALDYVVASDDVPRSRPAPAMALRNVVELGIADVAGCVKVDDTAPGVEEGRRAGMWTVGLLLSGNAAGLSLEQFLSLDEAGREAARDRARAELQAGAPHYLIDTVADLPPVLADIETRLAAGQRP</sequence>
<gene>
    <name evidence="1" type="primary">phnX</name>
    <name type="ordered locus">BB1901</name>
</gene>
<organism>
    <name type="scientific">Bordetella bronchiseptica (strain ATCC BAA-588 / NCTC 13252 / RB50)</name>
    <name type="common">Alcaligenes bronchisepticus</name>
    <dbReference type="NCBI Taxonomy" id="257310"/>
    <lineage>
        <taxon>Bacteria</taxon>
        <taxon>Pseudomonadati</taxon>
        <taxon>Pseudomonadota</taxon>
        <taxon>Betaproteobacteria</taxon>
        <taxon>Burkholderiales</taxon>
        <taxon>Alcaligenaceae</taxon>
        <taxon>Bordetella</taxon>
    </lineage>
</organism>